<accession>Q5WLR0</accession>
<organism>
    <name type="scientific">Shouchella clausii (strain KSM-K16)</name>
    <name type="common">Alkalihalobacillus clausii</name>
    <dbReference type="NCBI Taxonomy" id="66692"/>
    <lineage>
        <taxon>Bacteria</taxon>
        <taxon>Bacillati</taxon>
        <taxon>Bacillota</taxon>
        <taxon>Bacilli</taxon>
        <taxon>Bacillales</taxon>
        <taxon>Bacillaceae</taxon>
        <taxon>Shouchella</taxon>
    </lineage>
</organism>
<comment type="function">
    <text evidence="1">One of the early assembly proteins it binds 23S rRNA. One of the proteins that surrounds the polypeptide exit tunnel on the outside of the ribosome. Forms the main docking site for trigger factor binding to the ribosome.</text>
</comment>
<comment type="subunit">
    <text evidence="1">Part of the 50S ribosomal subunit. Contacts protein L29, and trigger factor when it is bound to the ribosome.</text>
</comment>
<comment type="similarity">
    <text evidence="1">Belongs to the universal ribosomal protein uL23 family.</text>
</comment>
<name>RL23_SHOC1</name>
<feature type="chain" id="PRO_0000272701" description="Large ribosomal subunit protein uL23">
    <location>
        <begin position="1"/>
        <end position="95"/>
    </location>
</feature>
<reference key="1">
    <citation type="submission" date="2003-10" db="EMBL/GenBank/DDBJ databases">
        <title>The complete genome sequence of the alkaliphilic Bacillus clausii KSM-K16.</title>
        <authorList>
            <person name="Takaki Y."/>
            <person name="Kageyama Y."/>
            <person name="Shimamura S."/>
            <person name="Suzuki H."/>
            <person name="Nishi S."/>
            <person name="Hatada Y."/>
            <person name="Kawai S."/>
            <person name="Ito S."/>
            <person name="Horikoshi K."/>
        </authorList>
    </citation>
    <scope>NUCLEOTIDE SEQUENCE [LARGE SCALE GENOMIC DNA]</scope>
    <source>
        <strain>KSM-K16</strain>
    </source>
</reference>
<sequence length="95" mass="11065">MSNARDIIKRPVITERSTELMEDKKYTFEVDVRANKTQIKDAIEEIFEVKVTNVNTVNYKGKAKRFGRYTGFTPKRKKAIVQLSADSKELDFFEV</sequence>
<gene>
    <name evidence="1" type="primary">rplW</name>
    <name type="ordered locus">ABC0152</name>
</gene>
<keyword id="KW-1185">Reference proteome</keyword>
<keyword id="KW-0687">Ribonucleoprotein</keyword>
<keyword id="KW-0689">Ribosomal protein</keyword>
<keyword id="KW-0694">RNA-binding</keyword>
<keyword id="KW-0699">rRNA-binding</keyword>
<dbReference type="EMBL" id="AP006627">
    <property type="protein sequence ID" value="BAD62695.1"/>
    <property type="molecule type" value="Genomic_DNA"/>
</dbReference>
<dbReference type="RefSeq" id="WP_011245016.1">
    <property type="nucleotide sequence ID" value="NC_006582.1"/>
</dbReference>
<dbReference type="SMR" id="Q5WLR0"/>
<dbReference type="STRING" id="66692.ABC0152"/>
<dbReference type="KEGG" id="bcl:ABC0152"/>
<dbReference type="eggNOG" id="COG0089">
    <property type="taxonomic scope" value="Bacteria"/>
</dbReference>
<dbReference type="HOGENOM" id="CLU_037562_3_2_9"/>
<dbReference type="OrthoDB" id="9793353at2"/>
<dbReference type="Proteomes" id="UP000001168">
    <property type="component" value="Chromosome"/>
</dbReference>
<dbReference type="GO" id="GO:1990904">
    <property type="term" value="C:ribonucleoprotein complex"/>
    <property type="evidence" value="ECO:0007669"/>
    <property type="project" value="UniProtKB-KW"/>
</dbReference>
<dbReference type="GO" id="GO:0005840">
    <property type="term" value="C:ribosome"/>
    <property type="evidence" value="ECO:0007669"/>
    <property type="project" value="UniProtKB-KW"/>
</dbReference>
<dbReference type="GO" id="GO:0019843">
    <property type="term" value="F:rRNA binding"/>
    <property type="evidence" value="ECO:0007669"/>
    <property type="project" value="UniProtKB-UniRule"/>
</dbReference>
<dbReference type="GO" id="GO:0003735">
    <property type="term" value="F:structural constituent of ribosome"/>
    <property type="evidence" value="ECO:0007669"/>
    <property type="project" value="InterPro"/>
</dbReference>
<dbReference type="GO" id="GO:0006412">
    <property type="term" value="P:translation"/>
    <property type="evidence" value="ECO:0007669"/>
    <property type="project" value="UniProtKB-UniRule"/>
</dbReference>
<dbReference type="FunFam" id="3.30.70.330:FF:000001">
    <property type="entry name" value="50S ribosomal protein L23"/>
    <property type="match status" value="1"/>
</dbReference>
<dbReference type="Gene3D" id="3.30.70.330">
    <property type="match status" value="1"/>
</dbReference>
<dbReference type="HAMAP" id="MF_01369_B">
    <property type="entry name" value="Ribosomal_uL23_B"/>
    <property type="match status" value="1"/>
</dbReference>
<dbReference type="InterPro" id="IPR012677">
    <property type="entry name" value="Nucleotide-bd_a/b_plait_sf"/>
</dbReference>
<dbReference type="InterPro" id="IPR013025">
    <property type="entry name" value="Ribosomal_uL23-like"/>
</dbReference>
<dbReference type="InterPro" id="IPR012678">
    <property type="entry name" value="Ribosomal_uL23/eL15/eS24_sf"/>
</dbReference>
<dbReference type="NCBIfam" id="NF004363">
    <property type="entry name" value="PRK05738.2-4"/>
    <property type="match status" value="1"/>
</dbReference>
<dbReference type="PANTHER" id="PTHR11620">
    <property type="entry name" value="60S RIBOSOMAL PROTEIN L23A"/>
    <property type="match status" value="1"/>
</dbReference>
<dbReference type="Pfam" id="PF00276">
    <property type="entry name" value="Ribosomal_L23"/>
    <property type="match status" value="1"/>
</dbReference>
<dbReference type="SUPFAM" id="SSF54189">
    <property type="entry name" value="Ribosomal proteins S24e, L23 and L15e"/>
    <property type="match status" value="1"/>
</dbReference>
<protein>
    <recommendedName>
        <fullName evidence="1">Large ribosomal subunit protein uL23</fullName>
    </recommendedName>
    <alternativeName>
        <fullName evidence="2">50S ribosomal protein L23</fullName>
    </alternativeName>
</protein>
<proteinExistence type="inferred from homology"/>
<evidence type="ECO:0000255" key="1">
    <source>
        <dbReference type="HAMAP-Rule" id="MF_01369"/>
    </source>
</evidence>
<evidence type="ECO:0000305" key="2"/>